<feature type="chain" id="PRO_0000200105" description="Homeobox protein Hox-A13b">
    <location>
        <begin position="1"/>
        <end position="289"/>
    </location>
</feature>
<feature type="DNA-binding region" description="Homeobox" evidence="2">
    <location>
        <begin position="223"/>
        <end position="282"/>
    </location>
</feature>
<feature type="splice variant" id="VSP_019622" description="In isoform 2." evidence="4">
    <location>
        <begin position="210"/>
        <end position="213"/>
    </location>
</feature>
<feature type="sequence conflict" description="In Ref. 1; AAD15936." evidence="4" ref="1">
    <original>GPY</original>
    <variation>ALT</variation>
    <location>
        <begin position="144"/>
        <end position="146"/>
    </location>
</feature>
<protein>
    <recommendedName>
        <fullName>Homeobox protein Hox-A13b</fullName>
        <shortName>Hox-A13</shortName>
    </recommendedName>
</protein>
<reference key="1">
    <citation type="journal article" date="1998" name="Science">
        <title>Zebrafish hox clusters and vertebrate genome evolution.</title>
        <authorList>
            <person name="Amores A."/>
            <person name="Force A."/>
            <person name="Yan Y.-L."/>
            <person name="Joly L."/>
            <person name="Amemiya C."/>
            <person name="Fritz A."/>
            <person name="Ho R.K."/>
            <person name="Langeland J."/>
            <person name="Prince V.E."/>
            <person name="Wang Y.-L."/>
            <person name="Westerfield M."/>
            <person name="Ekker M."/>
            <person name="Postlethwait J.H."/>
        </authorList>
    </citation>
    <scope>NUCLEOTIDE SEQUENCE [GENOMIC DNA]</scope>
</reference>
<reference key="2">
    <citation type="submission" date="2005-02" db="EMBL/GenBank/DDBJ databases">
        <authorList>
            <consortium name="NIH - Zebrafish Gene Collection (ZGC) project"/>
        </authorList>
    </citation>
    <scope>NUCLEOTIDE SEQUENCE [LARGE SCALE MRNA] (ISOFORM 1)</scope>
    <source>
        <tissue>Embryo</tissue>
    </source>
</reference>
<reference key="3">
    <citation type="journal article" date="1996" name="Mech. Dev.">
        <title>Zebrafish Hoxa and Evx-2 genes: cloning, developmental expression and implications for the functional evolution of posterior Hox genes.</title>
        <authorList>
            <person name="Sordino P."/>
            <person name="Duboule D."/>
            <person name="Kondo T."/>
        </authorList>
    </citation>
    <scope>NUCLEOTIDE SEQUENCE [MRNA] OF 219-278</scope>
    <scope>DEVELOPMENTAL STAGE</scope>
    <source>
        <tissue>Embryo</tissue>
    </source>
</reference>
<name>HXADB_DANRE</name>
<accession>P79724</accession>
<accession>Q5CZP9</accession>
<accession>Q9PWL4</accession>
<dbReference type="EMBL" id="AF071242">
    <property type="protein sequence ID" value="AAD15936.1"/>
    <property type="molecule type" value="Genomic_DNA"/>
</dbReference>
<dbReference type="EMBL" id="BC090761">
    <property type="protein sequence ID" value="AAH90761.1"/>
    <property type="status" value="ALT_INIT"/>
    <property type="molecule type" value="mRNA"/>
</dbReference>
<dbReference type="EMBL" id="Y07699">
    <property type="protein sequence ID" value="CAA68961.1"/>
    <property type="molecule type" value="mRNA"/>
</dbReference>
<dbReference type="RefSeq" id="NP_571269.2">
    <molecule id="P79724-2"/>
    <property type="nucleotide sequence ID" value="NM_131194.2"/>
</dbReference>
<dbReference type="SMR" id="P79724"/>
<dbReference type="FunCoup" id="P79724">
    <property type="interactions" value="1238"/>
</dbReference>
<dbReference type="STRING" id="7955.ENSDARP00000052661"/>
<dbReference type="PaxDb" id="7955-ENSDARP00000052661"/>
<dbReference type="Ensembl" id="ENSDART00000052662">
    <molecule id="P79724-2"/>
    <property type="protein sequence ID" value="ENSDARP00000052661"/>
    <property type="gene ID" value="ENSDARG00000036254"/>
</dbReference>
<dbReference type="GeneID" id="30438"/>
<dbReference type="KEGG" id="dre:30438"/>
<dbReference type="AGR" id="ZFIN:ZDB-GENE-980526-365"/>
<dbReference type="CTD" id="30438"/>
<dbReference type="ZFIN" id="ZDB-GENE-980526-365">
    <property type="gene designation" value="hoxa13b"/>
</dbReference>
<dbReference type="eggNOG" id="KOG0487">
    <property type="taxonomic scope" value="Eukaryota"/>
</dbReference>
<dbReference type="HOGENOM" id="CLU_059940_1_0_1"/>
<dbReference type="InParanoid" id="P79724"/>
<dbReference type="OMA" id="SYYQCRM"/>
<dbReference type="OrthoDB" id="6159439at2759"/>
<dbReference type="PhylomeDB" id="P79724"/>
<dbReference type="TreeFam" id="TF330813"/>
<dbReference type="PRO" id="PR:P79724"/>
<dbReference type="Proteomes" id="UP000000437">
    <property type="component" value="Chromosome 16"/>
</dbReference>
<dbReference type="Bgee" id="ENSDARG00000036254">
    <property type="expression patterns" value="Expressed in pectoral fin fold and 13 other cell types or tissues"/>
</dbReference>
<dbReference type="GO" id="GO:0005634">
    <property type="term" value="C:nucleus"/>
    <property type="evidence" value="ECO:0007669"/>
    <property type="project" value="UniProtKB-SubCell"/>
</dbReference>
<dbReference type="GO" id="GO:0000981">
    <property type="term" value="F:DNA-binding transcription factor activity, RNA polymerase II-specific"/>
    <property type="evidence" value="ECO:0000314"/>
    <property type="project" value="ZFIN"/>
</dbReference>
<dbReference type="GO" id="GO:0000978">
    <property type="term" value="F:RNA polymerase II cis-regulatory region sequence-specific DNA binding"/>
    <property type="evidence" value="ECO:0000318"/>
    <property type="project" value="GO_Central"/>
</dbReference>
<dbReference type="GO" id="GO:0033333">
    <property type="term" value="P:fin development"/>
    <property type="evidence" value="ECO:0000315"/>
    <property type="project" value="ZFIN"/>
</dbReference>
<dbReference type="GO" id="GO:0000122">
    <property type="term" value="P:negative regulation of transcription by RNA polymerase II"/>
    <property type="evidence" value="ECO:0000314"/>
    <property type="project" value="ZFIN"/>
</dbReference>
<dbReference type="GO" id="GO:0006357">
    <property type="term" value="P:regulation of transcription by RNA polymerase II"/>
    <property type="evidence" value="ECO:0000318"/>
    <property type="project" value="GO_Central"/>
</dbReference>
<dbReference type="CDD" id="cd00086">
    <property type="entry name" value="homeodomain"/>
    <property type="match status" value="1"/>
</dbReference>
<dbReference type="FunFam" id="1.10.10.60:FF:000084">
    <property type="entry name" value="Homeobox protein Hox-D13"/>
    <property type="match status" value="1"/>
</dbReference>
<dbReference type="Gene3D" id="1.10.10.60">
    <property type="entry name" value="Homeodomain-like"/>
    <property type="match status" value="1"/>
</dbReference>
<dbReference type="InterPro" id="IPR051003">
    <property type="entry name" value="AP_axis_regulatory_Homeobox"/>
</dbReference>
<dbReference type="InterPro" id="IPR001356">
    <property type="entry name" value="HD"/>
</dbReference>
<dbReference type="InterPro" id="IPR017970">
    <property type="entry name" value="Homeobox_CS"/>
</dbReference>
<dbReference type="InterPro" id="IPR009057">
    <property type="entry name" value="Homeodomain-like_sf"/>
</dbReference>
<dbReference type="InterPro" id="IPR022067">
    <property type="entry name" value="HoxA13_N"/>
</dbReference>
<dbReference type="PANTHER" id="PTHR45804:SF9">
    <property type="entry name" value="HOMEOBOX PROTEIN HOX-A13A-RELATED"/>
    <property type="match status" value="1"/>
</dbReference>
<dbReference type="PANTHER" id="PTHR45804">
    <property type="entry name" value="SEGMENTATION PROTEIN FUSHI TARAZU-LIKE PROTEIN"/>
    <property type="match status" value="1"/>
</dbReference>
<dbReference type="Pfam" id="PF00046">
    <property type="entry name" value="Homeodomain"/>
    <property type="match status" value="1"/>
</dbReference>
<dbReference type="Pfam" id="PF12284">
    <property type="entry name" value="HoxA13_N"/>
    <property type="match status" value="1"/>
</dbReference>
<dbReference type="SMART" id="SM00389">
    <property type="entry name" value="HOX"/>
    <property type="match status" value="1"/>
</dbReference>
<dbReference type="SUPFAM" id="SSF46689">
    <property type="entry name" value="Homeodomain-like"/>
    <property type="match status" value="1"/>
</dbReference>
<dbReference type="PROSITE" id="PS00027">
    <property type="entry name" value="HOMEOBOX_1"/>
    <property type="match status" value="1"/>
</dbReference>
<dbReference type="PROSITE" id="PS50071">
    <property type="entry name" value="HOMEOBOX_2"/>
    <property type="match status" value="1"/>
</dbReference>
<organism>
    <name type="scientific">Danio rerio</name>
    <name type="common">Zebrafish</name>
    <name type="synonym">Brachydanio rerio</name>
    <dbReference type="NCBI Taxonomy" id="7955"/>
    <lineage>
        <taxon>Eukaryota</taxon>
        <taxon>Metazoa</taxon>
        <taxon>Chordata</taxon>
        <taxon>Craniata</taxon>
        <taxon>Vertebrata</taxon>
        <taxon>Euteleostomi</taxon>
        <taxon>Actinopterygii</taxon>
        <taxon>Neopterygii</taxon>
        <taxon>Teleostei</taxon>
        <taxon>Ostariophysi</taxon>
        <taxon>Cypriniformes</taxon>
        <taxon>Danionidae</taxon>
        <taxon>Danioninae</taxon>
        <taxon>Danio</taxon>
    </lineage>
</organism>
<comment type="function">
    <text evidence="1">Sequence-specific transcription factor which is part of a developmental regulatory system that provides cells with specific positional identities on the anterior-posterior axis.</text>
</comment>
<comment type="subcellular location">
    <subcellularLocation>
        <location evidence="2">Nucleus</location>
    </subcellularLocation>
</comment>
<comment type="alternative products">
    <event type="alternative splicing"/>
    <isoform>
        <id>P79724-2</id>
        <name>1</name>
        <sequence type="displayed"/>
    </isoform>
    <isoform>
        <id>P79724-1</id>
        <name>2</name>
        <sequence type="described" ref="VSP_019622"/>
    </isoform>
</comment>
<comment type="developmental stage">
    <text evidence="3">First detected at 12.5 hours post-fertilization (hpf) in dorsal presomitic mesoderm and in the neural keel, extending to the ventral somitic mesoderm during tail budding. At 16-19 hpf, restricted to the posterior end of the somitic mesoderm. Also expressed in the developing pectoral fins from 34 hpf, with progressive localization to the periphery.</text>
</comment>
<comment type="similarity">
    <text evidence="4">Belongs to the Abd-B homeobox family.</text>
</comment>
<comment type="sequence caution" evidence="4">
    <conflict type="erroneous initiation">
        <sequence resource="EMBL-CDS" id="AAH90761"/>
    </conflict>
</comment>
<proteinExistence type="evidence at transcript level"/>
<gene>
    <name type="primary">hoxa13b</name>
    <name type="synonym">hoxa-13</name>
    <name type="synonym">hoxa13</name>
    <name type="ORF">zgc:110514</name>
</gene>
<evidence type="ECO:0000250" key="1"/>
<evidence type="ECO:0000255" key="2">
    <source>
        <dbReference type="PROSITE-ProRule" id="PRU00108"/>
    </source>
</evidence>
<evidence type="ECO:0000269" key="3">
    <source>
    </source>
</evidence>
<evidence type="ECO:0000305" key="4"/>
<sequence>MTASLLLHSRWIDPVMFLYDNGLDDMSKNMEGFVGGNFAANQCRNLIAHPSTLAPSTTYTSSEVPVSGMGEPVKQCSPCSAVQNTPSASLPYGYFGGSYYPCRMPKSCTQPTTYGEKYMDTSVSGEEFPSRAKEFAFYQGYSSGPYQPVPSYLDVPVVPALSAPSEPRHESLLPVETYQPWAITNGWSSPVYCPKDQTQSSTLWKSSIQDTVSGTDGASVRRGRKKRVPYTKVQLKELEREYATNKFITKDKRRRISAHTNLTERQVTIWFQNRRVKEKKVVNKYKGIS</sequence>
<keyword id="KW-0025">Alternative splicing</keyword>
<keyword id="KW-0217">Developmental protein</keyword>
<keyword id="KW-0238">DNA-binding</keyword>
<keyword id="KW-0371">Homeobox</keyword>
<keyword id="KW-0539">Nucleus</keyword>
<keyword id="KW-1185">Reference proteome</keyword>
<keyword id="KW-0804">Transcription</keyword>
<keyword id="KW-0805">Transcription regulation</keyword>